<sequence length="240" mass="24888">MYLRRAVSKTLALPLRAPPGPAPLRKDASLRWISSNKFPGSSGSNMIYYLVVGVTVSAGGYYTYKRVTSGKAKRSDHVTDLKEKTKAELQPPQGEKENLVGAEEASLEAPEVSSTEASPVVTEDIPDAPAVVGKEAPPCPDDAEAAPSETVVVGAEPKPEMTDAATVETTEVSTETTSEVTSTGPEEAAAVDSAEGTTENESPGECAELEENSPVESESSAGEDLQEEACAGSEAASAQG</sequence>
<protein>
    <recommendedName>
        <fullName>Protein MGARP</fullName>
    </recommendedName>
    <alternativeName>
        <fullName>Corneal endothelium-specific protein 1</fullName>
        <shortName>CESP-1</shortName>
    </alternativeName>
    <alternativeName>
        <fullName>Hypoxia up-regulated mitochondrial movement regulator protein</fullName>
    </alternativeName>
    <alternativeName>
        <fullName>Mitochondria-localized glutamic acid-rich protein</fullName>
    </alternativeName>
    <alternativeName>
        <fullName>Ovary-specific acidic protein</fullName>
    </alternativeName>
</protein>
<comment type="function">
    <text evidence="2">Plays a role in the trafficking of mitochondria along microtubules. Regulates the kinesin-mediated axonal transport of mitochondria to nerve terminals along microtubules during hypoxia. Participates in the translocation of TRAK2/GRIF1 from the cytoplasm to the mitochondrion. Also plays a role in steroidogenesis through maintenance of mitochondrial abundance and morphology (By similarity). Plays an inhibitory role during neocortex development by regulating mitochondrial morphology, distribution and motility in neocortical neurons (By similarity).</text>
</comment>
<comment type="subunit">
    <text evidence="2">Interacts with RHOT1/Miro-1, RHOT2/Miro-2, TRAK1/OIP106 and TRAK2/GRIF1.</text>
</comment>
<comment type="subcellular location">
    <subcellularLocation>
        <location evidence="1">Mitochondrion</location>
    </subcellularLocation>
    <subcellularLocation>
        <location evidence="2">Mitochondrion outer membrane</location>
        <topology evidence="2">Single-pass type IV membrane protein</topology>
        <orientation evidence="2">Cytoplasmic side</orientation>
    </subcellularLocation>
    <subcellularLocation>
        <location evidence="2">Mitochondrion inner membrane</location>
        <topology evidence="2">Single-pass type IV membrane protein</topology>
        <orientation evidence="2">Cytoplasmic side</orientation>
    </subcellularLocation>
    <text evidence="2">Colocalizes with RHOT1, RHOT2, TRAK1 and TRAK2 at the mitochondrion.</text>
</comment>
<comment type="sequence caution" evidence="5">
    <conflict type="erroneous initiation">
        <sequence resource="EMBL-CDS" id="AAI48138"/>
    </conflict>
    <text>Extended N-terminus.</text>
</comment>
<gene>
    <name type="primary">MGARP</name>
    <name type="synonym">CESP1</name>
    <name type="synonym">HUMMR</name>
    <name type="synonym">OSAP</name>
</gene>
<dbReference type="EMBL" id="BC148137">
    <property type="protein sequence ID" value="AAI48138.1"/>
    <property type="status" value="ALT_INIT"/>
    <property type="molecule type" value="mRNA"/>
</dbReference>
<dbReference type="RefSeq" id="NP_001160083.1">
    <property type="nucleotide sequence ID" value="NM_001166611.1"/>
</dbReference>
<dbReference type="FunCoup" id="A6QLZ1">
    <property type="interactions" value="30"/>
</dbReference>
<dbReference type="STRING" id="9913.ENSBTAP00000045413"/>
<dbReference type="PaxDb" id="9913-ENSBTAP00000045413"/>
<dbReference type="GeneID" id="513234"/>
<dbReference type="KEGG" id="bta:513234"/>
<dbReference type="CTD" id="84709"/>
<dbReference type="eggNOG" id="ENOG502S6ZU">
    <property type="taxonomic scope" value="Eukaryota"/>
</dbReference>
<dbReference type="HOGENOM" id="CLU_088276_0_0_1"/>
<dbReference type="InParanoid" id="A6QLZ1"/>
<dbReference type="OrthoDB" id="9950323at2759"/>
<dbReference type="TreeFam" id="TF336324"/>
<dbReference type="Proteomes" id="UP000009136">
    <property type="component" value="Unplaced"/>
</dbReference>
<dbReference type="GO" id="GO:1904115">
    <property type="term" value="C:axon cytoplasm"/>
    <property type="evidence" value="ECO:0007669"/>
    <property type="project" value="GOC"/>
</dbReference>
<dbReference type="GO" id="GO:0005743">
    <property type="term" value="C:mitochondrial inner membrane"/>
    <property type="evidence" value="ECO:0000250"/>
    <property type="project" value="UniProtKB"/>
</dbReference>
<dbReference type="GO" id="GO:0005741">
    <property type="term" value="C:mitochondrial outer membrane"/>
    <property type="evidence" value="ECO:0000250"/>
    <property type="project" value="UniProtKB"/>
</dbReference>
<dbReference type="GO" id="GO:0005739">
    <property type="term" value="C:mitochondrion"/>
    <property type="evidence" value="ECO:0000250"/>
    <property type="project" value="UniProtKB"/>
</dbReference>
<dbReference type="GO" id="GO:0008089">
    <property type="term" value="P:anterograde axonal transport"/>
    <property type="evidence" value="ECO:0000250"/>
    <property type="project" value="UniProtKB"/>
</dbReference>
<dbReference type="GO" id="GO:0061564">
    <property type="term" value="P:axon development"/>
    <property type="evidence" value="ECO:0000250"/>
    <property type="project" value="UniProtKB"/>
</dbReference>
<dbReference type="GO" id="GO:0019896">
    <property type="term" value="P:axonal transport of mitochondrion"/>
    <property type="evidence" value="ECO:0000250"/>
    <property type="project" value="UniProtKB"/>
</dbReference>
<dbReference type="GO" id="GO:0097211">
    <property type="term" value="P:cellular response to gonadotropin-releasing hormone"/>
    <property type="evidence" value="ECO:0000250"/>
    <property type="project" value="UniProtKB"/>
</dbReference>
<dbReference type="GO" id="GO:0071456">
    <property type="term" value="P:cellular response to hypoxia"/>
    <property type="evidence" value="ECO:0000250"/>
    <property type="project" value="UniProtKB"/>
</dbReference>
<dbReference type="GO" id="GO:0071383">
    <property type="term" value="P:cellular response to steroid hormone stimulus"/>
    <property type="evidence" value="ECO:0000250"/>
    <property type="project" value="UniProtKB"/>
</dbReference>
<dbReference type="GO" id="GO:0021987">
    <property type="term" value="P:cerebral cortex development"/>
    <property type="evidence" value="ECO:0000250"/>
    <property type="project" value="UniProtKB"/>
</dbReference>
<dbReference type="GO" id="GO:2000171">
    <property type="term" value="P:negative regulation of dendrite development"/>
    <property type="evidence" value="ECO:0000250"/>
    <property type="project" value="UniProtKB"/>
</dbReference>
<dbReference type="GO" id="GO:0006626">
    <property type="term" value="P:protein targeting to mitochondrion"/>
    <property type="evidence" value="ECO:0000250"/>
    <property type="project" value="UniProtKB"/>
</dbReference>
<dbReference type="GO" id="GO:0010821">
    <property type="term" value="P:regulation of mitochondrion organization"/>
    <property type="evidence" value="ECO:0000250"/>
    <property type="project" value="UniProtKB"/>
</dbReference>
<dbReference type="GO" id="GO:0008090">
    <property type="term" value="P:retrograde axonal transport"/>
    <property type="evidence" value="ECO:0000250"/>
    <property type="project" value="UniProtKB"/>
</dbReference>
<dbReference type="InterPro" id="IPR026093">
    <property type="entry name" value="MGARP"/>
</dbReference>
<dbReference type="InterPro" id="IPR032773">
    <property type="entry name" value="MGARP_N"/>
</dbReference>
<dbReference type="PANTHER" id="PTHR22910">
    <property type="entry name" value="PROTEIN MGARP"/>
    <property type="match status" value="1"/>
</dbReference>
<dbReference type="PANTHER" id="PTHR22910:SF6">
    <property type="entry name" value="PROTEIN MGARP"/>
    <property type="match status" value="1"/>
</dbReference>
<dbReference type="Pfam" id="PF14962">
    <property type="entry name" value="AIF-MLS"/>
    <property type="match status" value="1"/>
</dbReference>
<feature type="chain" id="PRO_0000318763" description="Protein MGARP">
    <location>
        <begin position="1"/>
        <end position="240"/>
    </location>
</feature>
<feature type="topological domain" description="Cytoplasmic" evidence="2">
    <location>
        <begin position="1"/>
        <end position="45"/>
    </location>
</feature>
<feature type="transmembrane region" description="Helical; Anchor for type IV membrane protein" evidence="3">
    <location>
        <begin position="46"/>
        <end position="64"/>
    </location>
</feature>
<feature type="topological domain" description="Mitochondrial intermembrane" evidence="2">
    <location>
        <begin position="65"/>
        <end position="240"/>
    </location>
</feature>
<feature type="region of interest" description="Disordered" evidence="4">
    <location>
        <begin position="72"/>
        <end position="240"/>
    </location>
</feature>
<feature type="compositionally biased region" description="Basic and acidic residues" evidence="4">
    <location>
        <begin position="73"/>
        <end position="87"/>
    </location>
</feature>
<feature type="compositionally biased region" description="Low complexity" evidence="4">
    <location>
        <begin position="166"/>
        <end position="183"/>
    </location>
</feature>
<feature type="compositionally biased region" description="Low complexity" evidence="4">
    <location>
        <begin position="228"/>
        <end position="240"/>
    </location>
</feature>
<organism>
    <name type="scientific">Bos taurus</name>
    <name type="common">Bovine</name>
    <dbReference type="NCBI Taxonomy" id="9913"/>
    <lineage>
        <taxon>Eukaryota</taxon>
        <taxon>Metazoa</taxon>
        <taxon>Chordata</taxon>
        <taxon>Craniata</taxon>
        <taxon>Vertebrata</taxon>
        <taxon>Euteleostomi</taxon>
        <taxon>Mammalia</taxon>
        <taxon>Eutheria</taxon>
        <taxon>Laurasiatheria</taxon>
        <taxon>Artiodactyla</taxon>
        <taxon>Ruminantia</taxon>
        <taxon>Pecora</taxon>
        <taxon>Bovidae</taxon>
        <taxon>Bovinae</taxon>
        <taxon>Bos</taxon>
    </lineage>
</organism>
<accession>A6QLZ1</accession>
<reference key="1">
    <citation type="submission" date="2007-06" db="EMBL/GenBank/DDBJ databases">
        <authorList>
            <consortium name="NIH - Mammalian Gene Collection (MGC) project"/>
        </authorList>
    </citation>
    <scope>NUCLEOTIDE SEQUENCE [LARGE SCALE MRNA]</scope>
    <source>
        <strain>Hereford</strain>
        <tissue>Fetal spinal cord</tissue>
    </source>
</reference>
<name>HUMMR_BOVIN</name>
<evidence type="ECO:0000250" key="1">
    <source>
        <dbReference type="UniProtKB" id="Q8TDB4"/>
    </source>
</evidence>
<evidence type="ECO:0000250" key="2">
    <source>
        <dbReference type="UniProtKB" id="Q8VI64"/>
    </source>
</evidence>
<evidence type="ECO:0000255" key="3"/>
<evidence type="ECO:0000256" key="4">
    <source>
        <dbReference type="SAM" id="MobiDB-lite"/>
    </source>
</evidence>
<evidence type="ECO:0000305" key="5"/>
<keyword id="KW-0472">Membrane</keyword>
<keyword id="KW-0496">Mitochondrion</keyword>
<keyword id="KW-0999">Mitochondrion inner membrane</keyword>
<keyword id="KW-1000">Mitochondrion outer membrane</keyword>
<keyword id="KW-1185">Reference proteome</keyword>
<keyword id="KW-0812">Transmembrane</keyword>
<keyword id="KW-1133">Transmembrane helix</keyword>
<proteinExistence type="evidence at transcript level"/>